<reference key="1">
    <citation type="journal article" date="2011" name="Stand. Genomic Sci.">
        <title>Complete genome sequence of Rhodospirillum rubrum type strain (S1).</title>
        <authorList>
            <person name="Munk A.C."/>
            <person name="Copeland A."/>
            <person name="Lucas S."/>
            <person name="Lapidus A."/>
            <person name="Del Rio T.G."/>
            <person name="Barry K."/>
            <person name="Detter J.C."/>
            <person name="Hammon N."/>
            <person name="Israni S."/>
            <person name="Pitluck S."/>
            <person name="Brettin T."/>
            <person name="Bruce D."/>
            <person name="Han C."/>
            <person name="Tapia R."/>
            <person name="Gilna P."/>
            <person name="Schmutz J."/>
            <person name="Larimer F."/>
            <person name="Land M."/>
            <person name="Kyrpides N.C."/>
            <person name="Mavromatis K."/>
            <person name="Richardson P."/>
            <person name="Rohde M."/>
            <person name="Goeker M."/>
            <person name="Klenk H.P."/>
            <person name="Zhang Y."/>
            <person name="Roberts G.P."/>
            <person name="Reslewic S."/>
            <person name="Schwartz D.C."/>
        </authorList>
    </citation>
    <scope>NUCLEOTIDE SEQUENCE [LARGE SCALE GENOMIC DNA]</scope>
    <source>
        <strain>ATCC 11170 / ATH 1.1.1 / DSM 467 / LMG 4362 / NCIMB 8255 / S1</strain>
    </source>
</reference>
<protein>
    <recommendedName>
        <fullName evidence="1">Succinate--CoA ligase [ADP-forming] subunit beta</fullName>
        <ecNumber evidence="1">6.2.1.5</ecNumber>
    </recommendedName>
    <alternativeName>
        <fullName evidence="1">Succinyl-CoA synthetase subunit beta</fullName>
        <shortName evidence="1">SCS-beta</shortName>
    </alternativeName>
</protein>
<feature type="chain" id="PRO_1000082194" description="Succinate--CoA ligase [ADP-forming] subunit beta">
    <location>
        <begin position="1"/>
        <end position="399"/>
    </location>
</feature>
<feature type="domain" description="ATP-grasp" evidence="1">
    <location>
        <begin position="9"/>
        <end position="254"/>
    </location>
</feature>
<feature type="binding site" evidence="1">
    <location>
        <position position="46"/>
    </location>
    <ligand>
        <name>ATP</name>
        <dbReference type="ChEBI" id="CHEBI:30616"/>
    </ligand>
</feature>
<feature type="binding site" evidence="1">
    <location>
        <begin position="53"/>
        <end position="55"/>
    </location>
    <ligand>
        <name>ATP</name>
        <dbReference type="ChEBI" id="CHEBI:30616"/>
    </ligand>
</feature>
<feature type="binding site" evidence="1">
    <location>
        <position position="109"/>
    </location>
    <ligand>
        <name>ATP</name>
        <dbReference type="ChEBI" id="CHEBI:30616"/>
    </ligand>
</feature>
<feature type="binding site" evidence="1">
    <location>
        <position position="112"/>
    </location>
    <ligand>
        <name>ATP</name>
        <dbReference type="ChEBI" id="CHEBI:30616"/>
    </ligand>
</feature>
<feature type="binding site" evidence="1">
    <location>
        <position position="117"/>
    </location>
    <ligand>
        <name>ATP</name>
        <dbReference type="ChEBI" id="CHEBI:30616"/>
    </ligand>
</feature>
<feature type="binding site" evidence="1">
    <location>
        <position position="209"/>
    </location>
    <ligand>
        <name>Mg(2+)</name>
        <dbReference type="ChEBI" id="CHEBI:18420"/>
    </ligand>
</feature>
<feature type="binding site" evidence="1">
    <location>
        <position position="223"/>
    </location>
    <ligand>
        <name>Mg(2+)</name>
        <dbReference type="ChEBI" id="CHEBI:18420"/>
    </ligand>
</feature>
<feature type="binding site" evidence="1">
    <location>
        <position position="274"/>
    </location>
    <ligand>
        <name>substrate</name>
        <note>ligand shared with subunit alpha</note>
    </ligand>
</feature>
<feature type="binding site" evidence="1">
    <location>
        <begin position="331"/>
        <end position="333"/>
    </location>
    <ligand>
        <name>substrate</name>
        <note>ligand shared with subunit alpha</note>
    </ligand>
</feature>
<dbReference type="EC" id="6.2.1.5" evidence="1"/>
<dbReference type="EMBL" id="CP000230">
    <property type="protein sequence ID" value="ABC22012.1"/>
    <property type="molecule type" value="Genomic_DNA"/>
</dbReference>
<dbReference type="RefSeq" id="WP_011388966.1">
    <property type="nucleotide sequence ID" value="NC_007643.1"/>
</dbReference>
<dbReference type="RefSeq" id="YP_426299.1">
    <property type="nucleotide sequence ID" value="NC_007643.1"/>
</dbReference>
<dbReference type="SMR" id="Q2RV33"/>
<dbReference type="STRING" id="269796.Rru_A1211"/>
<dbReference type="EnsemblBacteria" id="ABC22012">
    <property type="protein sequence ID" value="ABC22012"/>
    <property type="gene ID" value="Rru_A1211"/>
</dbReference>
<dbReference type="KEGG" id="rru:Rru_A1211"/>
<dbReference type="PATRIC" id="fig|269796.9.peg.1276"/>
<dbReference type="eggNOG" id="COG0045">
    <property type="taxonomic scope" value="Bacteria"/>
</dbReference>
<dbReference type="HOGENOM" id="CLU_037430_0_2_5"/>
<dbReference type="PhylomeDB" id="Q2RV33"/>
<dbReference type="UniPathway" id="UPA00223">
    <property type="reaction ID" value="UER00999"/>
</dbReference>
<dbReference type="Proteomes" id="UP000001929">
    <property type="component" value="Chromosome"/>
</dbReference>
<dbReference type="GO" id="GO:0005829">
    <property type="term" value="C:cytosol"/>
    <property type="evidence" value="ECO:0007669"/>
    <property type="project" value="TreeGrafter"/>
</dbReference>
<dbReference type="GO" id="GO:0042709">
    <property type="term" value="C:succinate-CoA ligase complex"/>
    <property type="evidence" value="ECO:0007669"/>
    <property type="project" value="TreeGrafter"/>
</dbReference>
<dbReference type="GO" id="GO:0005524">
    <property type="term" value="F:ATP binding"/>
    <property type="evidence" value="ECO:0007669"/>
    <property type="project" value="UniProtKB-UniRule"/>
</dbReference>
<dbReference type="GO" id="GO:0000287">
    <property type="term" value="F:magnesium ion binding"/>
    <property type="evidence" value="ECO:0007669"/>
    <property type="project" value="UniProtKB-UniRule"/>
</dbReference>
<dbReference type="GO" id="GO:0004775">
    <property type="term" value="F:succinate-CoA ligase (ADP-forming) activity"/>
    <property type="evidence" value="ECO:0007669"/>
    <property type="project" value="UniProtKB-UniRule"/>
</dbReference>
<dbReference type="GO" id="GO:0004776">
    <property type="term" value="F:succinate-CoA ligase (GDP-forming) activity"/>
    <property type="evidence" value="ECO:0007669"/>
    <property type="project" value="RHEA"/>
</dbReference>
<dbReference type="GO" id="GO:0006104">
    <property type="term" value="P:succinyl-CoA metabolic process"/>
    <property type="evidence" value="ECO:0007669"/>
    <property type="project" value="TreeGrafter"/>
</dbReference>
<dbReference type="GO" id="GO:0006099">
    <property type="term" value="P:tricarboxylic acid cycle"/>
    <property type="evidence" value="ECO:0007669"/>
    <property type="project" value="UniProtKB-UniRule"/>
</dbReference>
<dbReference type="FunFam" id="3.30.1490.20:FF:000002">
    <property type="entry name" value="Succinate--CoA ligase [ADP-forming] subunit beta"/>
    <property type="match status" value="1"/>
</dbReference>
<dbReference type="FunFam" id="3.30.470.20:FF:000002">
    <property type="entry name" value="Succinate--CoA ligase [ADP-forming] subunit beta"/>
    <property type="match status" value="1"/>
</dbReference>
<dbReference type="FunFam" id="3.40.50.261:FF:000001">
    <property type="entry name" value="Succinate--CoA ligase [ADP-forming] subunit beta"/>
    <property type="match status" value="1"/>
</dbReference>
<dbReference type="Gene3D" id="3.30.1490.20">
    <property type="entry name" value="ATP-grasp fold, A domain"/>
    <property type="match status" value="1"/>
</dbReference>
<dbReference type="Gene3D" id="3.30.470.20">
    <property type="entry name" value="ATP-grasp fold, B domain"/>
    <property type="match status" value="1"/>
</dbReference>
<dbReference type="Gene3D" id="3.40.50.261">
    <property type="entry name" value="Succinyl-CoA synthetase domains"/>
    <property type="match status" value="1"/>
</dbReference>
<dbReference type="HAMAP" id="MF_00558">
    <property type="entry name" value="Succ_CoA_beta"/>
    <property type="match status" value="1"/>
</dbReference>
<dbReference type="InterPro" id="IPR011761">
    <property type="entry name" value="ATP-grasp"/>
</dbReference>
<dbReference type="InterPro" id="IPR013650">
    <property type="entry name" value="ATP-grasp_succ-CoA_synth-type"/>
</dbReference>
<dbReference type="InterPro" id="IPR013815">
    <property type="entry name" value="ATP_grasp_subdomain_1"/>
</dbReference>
<dbReference type="InterPro" id="IPR017866">
    <property type="entry name" value="Succ-CoA_synthase_bsu_CS"/>
</dbReference>
<dbReference type="InterPro" id="IPR005811">
    <property type="entry name" value="SUCC_ACL_C"/>
</dbReference>
<dbReference type="InterPro" id="IPR005809">
    <property type="entry name" value="Succ_CoA_ligase-like_bsu"/>
</dbReference>
<dbReference type="InterPro" id="IPR016102">
    <property type="entry name" value="Succinyl-CoA_synth-like"/>
</dbReference>
<dbReference type="NCBIfam" id="NF001913">
    <property type="entry name" value="PRK00696.1"/>
    <property type="match status" value="1"/>
</dbReference>
<dbReference type="NCBIfam" id="TIGR01016">
    <property type="entry name" value="sucCoAbeta"/>
    <property type="match status" value="1"/>
</dbReference>
<dbReference type="PANTHER" id="PTHR11815:SF10">
    <property type="entry name" value="SUCCINATE--COA LIGASE [GDP-FORMING] SUBUNIT BETA, MITOCHONDRIAL"/>
    <property type="match status" value="1"/>
</dbReference>
<dbReference type="PANTHER" id="PTHR11815">
    <property type="entry name" value="SUCCINYL-COA SYNTHETASE BETA CHAIN"/>
    <property type="match status" value="1"/>
</dbReference>
<dbReference type="Pfam" id="PF08442">
    <property type="entry name" value="ATP-grasp_2"/>
    <property type="match status" value="1"/>
</dbReference>
<dbReference type="Pfam" id="PF00549">
    <property type="entry name" value="Ligase_CoA"/>
    <property type="match status" value="1"/>
</dbReference>
<dbReference type="PIRSF" id="PIRSF001554">
    <property type="entry name" value="SucCS_beta"/>
    <property type="match status" value="1"/>
</dbReference>
<dbReference type="SUPFAM" id="SSF56059">
    <property type="entry name" value="Glutathione synthetase ATP-binding domain-like"/>
    <property type="match status" value="1"/>
</dbReference>
<dbReference type="SUPFAM" id="SSF52210">
    <property type="entry name" value="Succinyl-CoA synthetase domains"/>
    <property type="match status" value="1"/>
</dbReference>
<dbReference type="PROSITE" id="PS50975">
    <property type="entry name" value="ATP_GRASP"/>
    <property type="match status" value="1"/>
</dbReference>
<dbReference type="PROSITE" id="PS01217">
    <property type="entry name" value="SUCCINYL_COA_LIG_3"/>
    <property type="match status" value="1"/>
</dbReference>
<sequence>MNIHEYQAKQVLAKYGVPVLKGGVAYTAEEAEKVALDLAGPVYVVKSQIHAGGRGKGHFKEPSAGDKGGVRVVKSTDEVFSNAKQMLGATLVTHQSGAEGKEVKRVYIEDGCDIKRELYLSLLVDRATSAVTVMASTEGGMDIEEVANHSPEKIFFQAIDQATGISGFHCRNVAFSLGLEGKQVGAFTKLLSALYKCFTETDCSMLEINPLVVTGDGQVIPLDCKMNFDSNALYRHPDIVEYRDEDEEDPMELEASKHDLNYIKLDGSIGCMVNGAGLAMATMDIIKLKGGAPANFLDVGGGATRERVTAAFKIILSDPNVDGILVNIFGGIMRCDVIAEGVIAAAREVSLNVPLVVRLEGTNVELGKKIMVESGLPIISADNLADAAEKVVKAVKEAS</sequence>
<name>SUCC_RHORT</name>
<evidence type="ECO:0000255" key="1">
    <source>
        <dbReference type="HAMAP-Rule" id="MF_00558"/>
    </source>
</evidence>
<accession>Q2RV33</accession>
<organism>
    <name type="scientific">Rhodospirillum rubrum (strain ATCC 11170 / ATH 1.1.1 / DSM 467 / LMG 4362 / NCIMB 8255 / S1)</name>
    <dbReference type="NCBI Taxonomy" id="269796"/>
    <lineage>
        <taxon>Bacteria</taxon>
        <taxon>Pseudomonadati</taxon>
        <taxon>Pseudomonadota</taxon>
        <taxon>Alphaproteobacteria</taxon>
        <taxon>Rhodospirillales</taxon>
        <taxon>Rhodospirillaceae</taxon>
        <taxon>Rhodospirillum</taxon>
    </lineage>
</organism>
<proteinExistence type="inferred from homology"/>
<gene>
    <name evidence="1" type="primary">sucC</name>
    <name type="ordered locus">Rru_A1211</name>
</gene>
<comment type="function">
    <text evidence="1">Succinyl-CoA synthetase functions in the citric acid cycle (TCA), coupling the hydrolysis of succinyl-CoA to the synthesis of either ATP or GTP and thus represents the only step of substrate-level phosphorylation in the TCA. The beta subunit provides nucleotide specificity of the enzyme and binds the substrate succinate, while the binding sites for coenzyme A and phosphate are found in the alpha subunit.</text>
</comment>
<comment type="catalytic activity">
    <reaction evidence="1">
        <text>succinate + ATP + CoA = succinyl-CoA + ADP + phosphate</text>
        <dbReference type="Rhea" id="RHEA:17661"/>
        <dbReference type="ChEBI" id="CHEBI:30031"/>
        <dbReference type="ChEBI" id="CHEBI:30616"/>
        <dbReference type="ChEBI" id="CHEBI:43474"/>
        <dbReference type="ChEBI" id="CHEBI:57287"/>
        <dbReference type="ChEBI" id="CHEBI:57292"/>
        <dbReference type="ChEBI" id="CHEBI:456216"/>
        <dbReference type="EC" id="6.2.1.5"/>
    </reaction>
    <physiologicalReaction direction="right-to-left" evidence="1">
        <dbReference type="Rhea" id="RHEA:17663"/>
    </physiologicalReaction>
</comment>
<comment type="catalytic activity">
    <reaction evidence="1">
        <text>GTP + succinate + CoA = succinyl-CoA + GDP + phosphate</text>
        <dbReference type="Rhea" id="RHEA:22120"/>
        <dbReference type="ChEBI" id="CHEBI:30031"/>
        <dbReference type="ChEBI" id="CHEBI:37565"/>
        <dbReference type="ChEBI" id="CHEBI:43474"/>
        <dbReference type="ChEBI" id="CHEBI:57287"/>
        <dbReference type="ChEBI" id="CHEBI:57292"/>
        <dbReference type="ChEBI" id="CHEBI:58189"/>
    </reaction>
    <physiologicalReaction direction="right-to-left" evidence="1">
        <dbReference type="Rhea" id="RHEA:22122"/>
    </physiologicalReaction>
</comment>
<comment type="cofactor">
    <cofactor evidence="1">
        <name>Mg(2+)</name>
        <dbReference type="ChEBI" id="CHEBI:18420"/>
    </cofactor>
    <text evidence="1">Binds 1 Mg(2+) ion per subunit.</text>
</comment>
<comment type="pathway">
    <text evidence="1">Carbohydrate metabolism; tricarboxylic acid cycle; succinate from succinyl-CoA (ligase route): step 1/1.</text>
</comment>
<comment type="subunit">
    <text evidence="1">Heterotetramer of two alpha and two beta subunits.</text>
</comment>
<comment type="similarity">
    <text evidence="1">Belongs to the succinate/malate CoA ligase beta subunit family.</text>
</comment>
<keyword id="KW-0067">ATP-binding</keyword>
<keyword id="KW-0436">Ligase</keyword>
<keyword id="KW-0460">Magnesium</keyword>
<keyword id="KW-0479">Metal-binding</keyword>
<keyword id="KW-0547">Nucleotide-binding</keyword>
<keyword id="KW-1185">Reference proteome</keyword>
<keyword id="KW-0816">Tricarboxylic acid cycle</keyword>